<protein>
    <recommendedName>
        <fullName>Photosystem I reaction center subunit IX</fullName>
    </recommendedName>
    <alternativeName>
        <fullName>PSI-J</fullName>
    </alternativeName>
</protein>
<feature type="chain" id="PRO_0000288991" description="Photosystem I reaction center subunit IX">
    <location>
        <begin position="1"/>
        <end position="44"/>
    </location>
</feature>
<feature type="transmembrane region" description="Helical" evidence="2">
    <location>
        <begin position="7"/>
        <end position="27"/>
    </location>
</feature>
<reference key="1">
    <citation type="journal article" date="2004" name="Plant Physiol.">
        <title>A comparison of rice chloroplast genomes.</title>
        <authorList>
            <person name="Tang J."/>
            <person name="Xia H."/>
            <person name="Cao M."/>
            <person name="Zhang X."/>
            <person name="Zeng W."/>
            <person name="Hu S."/>
            <person name="Tong W."/>
            <person name="Wang J."/>
            <person name="Wang J."/>
            <person name="Yu J."/>
            <person name="Yang H."/>
            <person name="Zhu L."/>
        </authorList>
    </citation>
    <scope>NUCLEOTIDE SEQUENCE [LARGE SCALE GENOMIC DNA]</scope>
    <source>
        <strain>cv. 93-11</strain>
    </source>
</reference>
<gene>
    <name type="primary">psaJ</name>
</gene>
<dbReference type="EMBL" id="AY522329">
    <property type="status" value="NOT_ANNOTATED_CDS"/>
    <property type="molecule type" value="Genomic_DNA"/>
</dbReference>
<dbReference type="RefSeq" id="YP_009161384.1">
    <property type="nucleotide sequence ID" value="NC_027678.1"/>
</dbReference>
<dbReference type="SMR" id="P0C374"/>
<dbReference type="STRING" id="39946.P0C374"/>
<dbReference type="Proteomes" id="UP000007015">
    <property type="component" value="Chloroplast"/>
</dbReference>
<dbReference type="GO" id="GO:0009535">
    <property type="term" value="C:chloroplast thylakoid membrane"/>
    <property type="evidence" value="ECO:0007669"/>
    <property type="project" value="UniProtKB-SubCell"/>
</dbReference>
<dbReference type="GO" id="GO:0009522">
    <property type="term" value="C:photosystem I"/>
    <property type="evidence" value="ECO:0007669"/>
    <property type="project" value="UniProtKB-KW"/>
</dbReference>
<dbReference type="GO" id="GO:0009536">
    <property type="term" value="C:plastid"/>
    <property type="evidence" value="ECO:0000305"/>
    <property type="project" value="Gramene"/>
</dbReference>
<dbReference type="GO" id="GO:0015979">
    <property type="term" value="P:photosynthesis"/>
    <property type="evidence" value="ECO:0007669"/>
    <property type="project" value="UniProtKB-UniRule"/>
</dbReference>
<dbReference type="FunFam" id="1.20.5.510:FF:000001">
    <property type="entry name" value="Photosystem I reaction center subunit IX"/>
    <property type="match status" value="1"/>
</dbReference>
<dbReference type="Gene3D" id="1.20.5.510">
    <property type="entry name" value="Single helix bin"/>
    <property type="match status" value="1"/>
</dbReference>
<dbReference type="HAMAP" id="MF_00522">
    <property type="entry name" value="PSI_PsaJ"/>
    <property type="match status" value="1"/>
</dbReference>
<dbReference type="InterPro" id="IPR002615">
    <property type="entry name" value="PSI_PsaJ"/>
</dbReference>
<dbReference type="InterPro" id="IPR036062">
    <property type="entry name" value="PSI_PsaJ_sf"/>
</dbReference>
<dbReference type="PANTHER" id="PTHR36082">
    <property type="match status" value="1"/>
</dbReference>
<dbReference type="PANTHER" id="PTHR36082:SF2">
    <property type="entry name" value="PHOTOSYSTEM I REACTION CENTER SUBUNIT IX"/>
    <property type="match status" value="1"/>
</dbReference>
<dbReference type="Pfam" id="PF01701">
    <property type="entry name" value="PSI_PsaJ"/>
    <property type="match status" value="1"/>
</dbReference>
<dbReference type="SUPFAM" id="SSF81544">
    <property type="entry name" value="Subunit IX of photosystem I reaction centre, PsaJ"/>
    <property type="match status" value="1"/>
</dbReference>
<accession>P0C374</accession>
<sequence>MRDIKTYLSVAPVLSTLWFGALAGLLIEINRLFPDALSFPFFSF</sequence>
<comment type="function">
    <text evidence="1">May help in the organization of the PsaE and PsaF subunits.</text>
</comment>
<comment type="subcellular location">
    <subcellularLocation>
        <location evidence="1">Plastid</location>
        <location evidence="1">Chloroplast thylakoid membrane</location>
        <topology evidence="1">Single-pass membrane protein</topology>
    </subcellularLocation>
</comment>
<comment type="similarity">
    <text evidence="3">Belongs to the PsaJ family.</text>
</comment>
<evidence type="ECO:0000250" key="1"/>
<evidence type="ECO:0000255" key="2"/>
<evidence type="ECO:0000305" key="3"/>
<organism>
    <name type="scientific">Oryza sativa subsp. indica</name>
    <name type="common">Rice</name>
    <dbReference type="NCBI Taxonomy" id="39946"/>
    <lineage>
        <taxon>Eukaryota</taxon>
        <taxon>Viridiplantae</taxon>
        <taxon>Streptophyta</taxon>
        <taxon>Embryophyta</taxon>
        <taxon>Tracheophyta</taxon>
        <taxon>Spermatophyta</taxon>
        <taxon>Magnoliopsida</taxon>
        <taxon>Liliopsida</taxon>
        <taxon>Poales</taxon>
        <taxon>Poaceae</taxon>
        <taxon>BOP clade</taxon>
        <taxon>Oryzoideae</taxon>
        <taxon>Oryzeae</taxon>
        <taxon>Oryzinae</taxon>
        <taxon>Oryza</taxon>
        <taxon>Oryza sativa</taxon>
    </lineage>
</organism>
<geneLocation type="chloroplast"/>
<name>PSAJ_ORYSI</name>
<proteinExistence type="inferred from homology"/>
<keyword id="KW-0150">Chloroplast</keyword>
<keyword id="KW-0472">Membrane</keyword>
<keyword id="KW-0602">Photosynthesis</keyword>
<keyword id="KW-0603">Photosystem I</keyword>
<keyword id="KW-0934">Plastid</keyword>
<keyword id="KW-1185">Reference proteome</keyword>
<keyword id="KW-0793">Thylakoid</keyword>
<keyword id="KW-0812">Transmembrane</keyword>
<keyword id="KW-1133">Transmembrane helix</keyword>